<accession>Q8ZAX6</accession>
<accession>Q0WAZ7</accession>
<accession>Q8D1P1</accession>
<protein>
    <recommendedName>
        <fullName evidence="1">Ribosomal protein L11 methyltransferase</fullName>
        <shortName evidence="1">L11 Mtase</shortName>
        <ecNumber evidence="1">2.1.1.-</ecNumber>
    </recommendedName>
</protein>
<sequence length="293" mass="31848">MPWIQLKLNTTGNQAESLGDVLVESGAVSVTFQDTHDNPVFEPLPGETRLWGDTDVIGLYDAETDMADVVAMLECHPQIGKGFIHKIEQLEDKDWEREWMDNFHPMRFGERLWICPSWRDVPDPTAVNVMLDPGLAFGTGTHPTTALCLQWLDSLDLNGKTLIDFGCGSGILAIAALKLGAARAIGIDIDPQAIQASRDNAQRNGVSERLELYLAKDQPAELSADVVVANILAGPLRELAPLISVLPTTGGHLGLSGVLATQAAGVAQAYEDKFILDPVAEKEEWCRITGIKK</sequence>
<name>PRMA_YERPE</name>
<gene>
    <name evidence="1" type="primary">prmA</name>
    <name type="ordered locus">YPO3656</name>
    <name type="ordered locus">y0212</name>
    <name type="ordered locus">YP_3891</name>
</gene>
<feature type="chain" id="PRO_0000192339" description="Ribosomal protein L11 methyltransferase">
    <location>
        <begin position="1"/>
        <end position="293"/>
    </location>
</feature>
<feature type="binding site" evidence="1">
    <location>
        <position position="145"/>
    </location>
    <ligand>
        <name>S-adenosyl-L-methionine</name>
        <dbReference type="ChEBI" id="CHEBI:59789"/>
    </ligand>
</feature>
<feature type="binding site" evidence="1">
    <location>
        <position position="166"/>
    </location>
    <ligand>
        <name>S-adenosyl-L-methionine</name>
        <dbReference type="ChEBI" id="CHEBI:59789"/>
    </ligand>
</feature>
<feature type="binding site" evidence="1">
    <location>
        <position position="188"/>
    </location>
    <ligand>
        <name>S-adenosyl-L-methionine</name>
        <dbReference type="ChEBI" id="CHEBI:59789"/>
    </ligand>
</feature>
<feature type="binding site" evidence="1">
    <location>
        <position position="230"/>
    </location>
    <ligand>
        <name>S-adenosyl-L-methionine</name>
        <dbReference type="ChEBI" id="CHEBI:59789"/>
    </ligand>
</feature>
<dbReference type="EC" id="2.1.1.-" evidence="1"/>
<dbReference type="EMBL" id="AL590842">
    <property type="protein sequence ID" value="CAL22244.1"/>
    <property type="molecule type" value="Genomic_DNA"/>
</dbReference>
<dbReference type="EMBL" id="AE009952">
    <property type="protein sequence ID" value="AAM83806.1"/>
    <property type="status" value="ALT_INIT"/>
    <property type="molecule type" value="Genomic_DNA"/>
</dbReference>
<dbReference type="EMBL" id="AE017042">
    <property type="protein sequence ID" value="AAS64036.1"/>
    <property type="status" value="ALT_INIT"/>
    <property type="molecule type" value="Genomic_DNA"/>
</dbReference>
<dbReference type="PIR" id="AI0444">
    <property type="entry name" value="AI0444"/>
</dbReference>
<dbReference type="RefSeq" id="WP_002220963.1">
    <property type="nucleotide sequence ID" value="NZ_WUCM01000059.1"/>
</dbReference>
<dbReference type="RefSeq" id="YP_002348541.1">
    <property type="nucleotide sequence ID" value="NC_003143.1"/>
</dbReference>
<dbReference type="SMR" id="Q8ZAX6"/>
<dbReference type="STRING" id="214092.YPO3656"/>
<dbReference type="PaxDb" id="214092-YPO3656"/>
<dbReference type="EnsemblBacteria" id="AAS64036">
    <property type="protein sequence ID" value="AAS64036"/>
    <property type="gene ID" value="YP_3891"/>
</dbReference>
<dbReference type="GeneID" id="57975080"/>
<dbReference type="KEGG" id="ype:YPO3656"/>
<dbReference type="KEGG" id="ypk:y0212"/>
<dbReference type="KEGG" id="ypm:YP_3891"/>
<dbReference type="PATRIC" id="fig|214092.21.peg.4158"/>
<dbReference type="eggNOG" id="COG2264">
    <property type="taxonomic scope" value="Bacteria"/>
</dbReference>
<dbReference type="HOGENOM" id="CLU_049382_4_1_6"/>
<dbReference type="OrthoDB" id="9785995at2"/>
<dbReference type="Proteomes" id="UP000000815">
    <property type="component" value="Chromosome"/>
</dbReference>
<dbReference type="Proteomes" id="UP000001019">
    <property type="component" value="Chromosome"/>
</dbReference>
<dbReference type="Proteomes" id="UP000002490">
    <property type="component" value="Chromosome"/>
</dbReference>
<dbReference type="GO" id="GO:0005829">
    <property type="term" value="C:cytosol"/>
    <property type="evidence" value="ECO:0000318"/>
    <property type="project" value="GO_Central"/>
</dbReference>
<dbReference type="GO" id="GO:0016279">
    <property type="term" value="F:protein-lysine N-methyltransferase activity"/>
    <property type="evidence" value="ECO:0000318"/>
    <property type="project" value="GO_Central"/>
</dbReference>
<dbReference type="GO" id="GO:0032259">
    <property type="term" value="P:methylation"/>
    <property type="evidence" value="ECO:0007669"/>
    <property type="project" value="UniProtKB-KW"/>
</dbReference>
<dbReference type="CDD" id="cd02440">
    <property type="entry name" value="AdoMet_MTases"/>
    <property type="match status" value="1"/>
</dbReference>
<dbReference type="Gene3D" id="3.40.50.150">
    <property type="entry name" value="Vaccinia Virus protein VP39"/>
    <property type="match status" value="1"/>
</dbReference>
<dbReference type="HAMAP" id="MF_00735">
    <property type="entry name" value="Methyltr_PrmA"/>
    <property type="match status" value="1"/>
</dbReference>
<dbReference type="InterPro" id="IPR050078">
    <property type="entry name" value="Ribosomal_L11_MeTrfase_PrmA"/>
</dbReference>
<dbReference type="InterPro" id="IPR004498">
    <property type="entry name" value="Ribosomal_PrmA_MeTrfase"/>
</dbReference>
<dbReference type="InterPro" id="IPR029063">
    <property type="entry name" value="SAM-dependent_MTases_sf"/>
</dbReference>
<dbReference type="NCBIfam" id="TIGR00406">
    <property type="entry name" value="prmA"/>
    <property type="match status" value="1"/>
</dbReference>
<dbReference type="PANTHER" id="PTHR43648">
    <property type="entry name" value="ELECTRON TRANSFER FLAVOPROTEIN BETA SUBUNIT LYSINE METHYLTRANSFERASE"/>
    <property type="match status" value="1"/>
</dbReference>
<dbReference type="PANTHER" id="PTHR43648:SF1">
    <property type="entry name" value="ELECTRON TRANSFER FLAVOPROTEIN BETA SUBUNIT LYSINE METHYLTRANSFERASE"/>
    <property type="match status" value="1"/>
</dbReference>
<dbReference type="Pfam" id="PF06325">
    <property type="entry name" value="PrmA"/>
    <property type="match status" value="1"/>
</dbReference>
<dbReference type="PIRSF" id="PIRSF000401">
    <property type="entry name" value="RPL11_MTase"/>
    <property type="match status" value="1"/>
</dbReference>
<dbReference type="SUPFAM" id="SSF53335">
    <property type="entry name" value="S-adenosyl-L-methionine-dependent methyltransferases"/>
    <property type="match status" value="1"/>
</dbReference>
<evidence type="ECO:0000255" key="1">
    <source>
        <dbReference type="HAMAP-Rule" id="MF_00735"/>
    </source>
</evidence>
<evidence type="ECO:0000305" key="2"/>
<comment type="function">
    <text evidence="1">Methylates ribosomal protein L11.</text>
</comment>
<comment type="catalytic activity">
    <reaction evidence="1">
        <text>L-lysyl-[protein] + 3 S-adenosyl-L-methionine = N(6),N(6),N(6)-trimethyl-L-lysyl-[protein] + 3 S-adenosyl-L-homocysteine + 3 H(+)</text>
        <dbReference type="Rhea" id="RHEA:54192"/>
        <dbReference type="Rhea" id="RHEA-COMP:9752"/>
        <dbReference type="Rhea" id="RHEA-COMP:13826"/>
        <dbReference type="ChEBI" id="CHEBI:15378"/>
        <dbReference type="ChEBI" id="CHEBI:29969"/>
        <dbReference type="ChEBI" id="CHEBI:57856"/>
        <dbReference type="ChEBI" id="CHEBI:59789"/>
        <dbReference type="ChEBI" id="CHEBI:61961"/>
    </reaction>
</comment>
<comment type="subcellular location">
    <subcellularLocation>
        <location evidence="1">Cytoplasm</location>
    </subcellularLocation>
</comment>
<comment type="similarity">
    <text evidence="1">Belongs to the methyltransferase superfamily. PrmA family.</text>
</comment>
<comment type="sequence caution" evidence="2">
    <conflict type="erroneous initiation">
        <sequence resource="EMBL-CDS" id="AAM83806"/>
    </conflict>
</comment>
<comment type="sequence caution" evidence="2">
    <conflict type="erroneous initiation">
        <sequence resource="EMBL-CDS" id="AAS64036"/>
    </conflict>
</comment>
<organism>
    <name type="scientific">Yersinia pestis</name>
    <dbReference type="NCBI Taxonomy" id="632"/>
    <lineage>
        <taxon>Bacteria</taxon>
        <taxon>Pseudomonadati</taxon>
        <taxon>Pseudomonadota</taxon>
        <taxon>Gammaproteobacteria</taxon>
        <taxon>Enterobacterales</taxon>
        <taxon>Yersiniaceae</taxon>
        <taxon>Yersinia</taxon>
    </lineage>
</organism>
<reference key="1">
    <citation type="journal article" date="2001" name="Nature">
        <title>Genome sequence of Yersinia pestis, the causative agent of plague.</title>
        <authorList>
            <person name="Parkhill J."/>
            <person name="Wren B.W."/>
            <person name="Thomson N.R."/>
            <person name="Titball R.W."/>
            <person name="Holden M.T.G."/>
            <person name="Prentice M.B."/>
            <person name="Sebaihia M."/>
            <person name="James K.D."/>
            <person name="Churcher C.M."/>
            <person name="Mungall K.L."/>
            <person name="Baker S."/>
            <person name="Basham D."/>
            <person name="Bentley S.D."/>
            <person name="Brooks K."/>
            <person name="Cerdeno-Tarraga A.-M."/>
            <person name="Chillingworth T."/>
            <person name="Cronin A."/>
            <person name="Davies R.M."/>
            <person name="Davis P."/>
            <person name="Dougan G."/>
            <person name="Feltwell T."/>
            <person name="Hamlin N."/>
            <person name="Holroyd S."/>
            <person name="Jagels K."/>
            <person name="Karlyshev A.V."/>
            <person name="Leather S."/>
            <person name="Moule S."/>
            <person name="Oyston P.C.F."/>
            <person name="Quail M.A."/>
            <person name="Rutherford K.M."/>
            <person name="Simmonds M."/>
            <person name="Skelton J."/>
            <person name="Stevens K."/>
            <person name="Whitehead S."/>
            <person name="Barrell B.G."/>
        </authorList>
    </citation>
    <scope>NUCLEOTIDE SEQUENCE [LARGE SCALE GENOMIC DNA]</scope>
    <source>
        <strain>CO-92 / Biovar Orientalis</strain>
    </source>
</reference>
<reference key="2">
    <citation type="journal article" date="2002" name="J. Bacteriol.">
        <title>Genome sequence of Yersinia pestis KIM.</title>
        <authorList>
            <person name="Deng W."/>
            <person name="Burland V."/>
            <person name="Plunkett G. III"/>
            <person name="Boutin A."/>
            <person name="Mayhew G.F."/>
            <person name="Liss P."/>
            <person name="Perna N.T."/>
            <person name="Rose D.J."/>
            <person name="Mau B."/>
            <person name="Zhou S."/>
            <person name="Schwartz D.C."/>
            <person name="Fetherston J.D."/>
            <person name="Lindler L.E."/>
            <person name="Brubaker R.R."/>
            <person name="Plano G.V."/>
            <person name="Straley S.C."/>
            <person name="McDonough K.A."/>
            <person name="Nilles M.L."/>
            <person name="Matson J.S."/>
            <person name="Blattner F.R."/>
            <person name="Perry R.D."/>
        </authorList>
    </citation>
    <scope>NUCLEOTIDE SEQUENCE [LARGE SCALE GENOMIC DNA]</scope>
    <source>
        <strain>KIM10+ / Biovar Mediaevalis</strain>
    </source>
</reference>
<reference key="3">
    <citation type="journal article" date="2004" name="DNA Res.">
        <title>Complete genome sequence of Yersinia pestis strain 91001, an isolate avirulent to humans.</title>
        <authorList>
            <person name="Song Y."/>
            <person name="Tong Z."/>
            <person name="Wang J."/>
            <person name="Wang L."/>
            <person name="Guo Z."/>
            <person name="Han Y."/>
            <person name="Zhang J."/>
            <person name="Pei D."/>
            <person name="Zhou D."/>
            <person name="Qin H."/>
            <person name="Pang X."/>
            <person name="Han Y."/>
            <person name="Zhai J."/>
            <person name="Li M."/>
            <person name="Cui B."/>
            <person name="Qi Z."/>
            <person name="Jin L."/>
            <person name="Dai R."/>
            <person name="Chen F."/>
            <person name="Li S."/>
            <person name="Ye C."/>
            <person name="Du Z."/>
            <person name="Lin W."/>
            <person name="Wang J."/>
            <person name="Yu J."/>
            <person name="Yang H."/>
            <person name="Wang J."/>
            <person name="Huang P."/>
            <person name="Yang R."/>
        </authorList>
    </citation>
    <scope>NUCLEOTIDE SEQUENCE [LARGE SCALE GENOMIC DNA]</scope>
    <source>
        <strain>91001 / Biovar Mediaevalis</strain>
    </source>
</reference>
<proteinExistence type="inferred from homology"/>
<keyword id="KW-0963">Cytoplasm</keyword>
<keyword id="KW-0489">Methyltransferase</keyword>
<keyword id="KW-1185">Reference proteome</keyword>
<keyword id="KW-0949">S-adenosyl-L-methionine</keyword>
<keyword id="KW-0808">Transferase</keyword>